<reference key="1">
    <citation type="journal article" date="1996" name="Proc. Natl. Acad. Sci. U.S.A.">
        <title>Evolutionary analyses of hedgehog and Hoxd-10 genes in fish species closely related to the zebrafish.</title>
        <authorList>
            <person name="Zardoya R."/>
            <person name="Abouheif E."/>
            <person name="Meyer A."/>
        </authorList>
    </citation>
    <scope>NUCLEOTIDE SEQUENCE [GENOMIC DNA]</scope>
    <source>
        <tissue>Muscle</tissue>
    </source>
</reference>
<protein>
    <recommendedName>
        <fullName>Tiggy-winkle hedgehog protein</fullName>
    </recommendedName>
</protein>
<dbReference type="EMBL" id="U68239">
    <property type="protein sequence ID" value="AAB38679.1"/>
    <property type="molecule type" value="Genomic_DNA"/>
</dbReference>
<dbReference type="SMR" id="P79715"/>
<dbReference type="GO" id="GO:0005615">
    <property type="term" value="C:extracellular space"/>
    <property type="evidence" value="ECO:0007669"/>
    <property type="project" value="TreeGrafter"/>
</dbReference>
<dbReference type="GO" id="GO:0005886">
    <property type="term" value="C:plasma membrane"/>
    <property type="evidence" value="ECO:0007669"/>
    <property type="project" value="UniProtKB-SubCell"/>
</dbReference>
<dbReference type="GO" id="GO:0005509">
    <property type="term" value="F:calcium ion binding"/>
    <property type="evidence" value="ECO:0007669"/>
    <property type="project" value="TreeGrafter"/>
</dbReference>
<dbReference type="GO" id="GO:0005113">
    <property type="term" value="F:patched binding"/>
    <property type="evidence" value="ECO:0007669"/>
    <property type="project" value="TreeGrafter"/>
</dbReference>
<dbReference type="GO" id="GO:0008233">
    <property type="term" value="F:peptidase activity"/>
    <property type="evidence" value="ECO:0007669"/>
    <property type="project" value="UniProtKB-KW"/>
</dbReference>
<dbReference type="GO" id="GO:0048513">
    <property type="term" value="P:animal organ development"/>
    <property type="evidence" value="ECO:0007669"/>
    <property type="project" value="UniProtKB-ARBA"/>
</dbReference>
<dbReference type="GO" id="GO:0048468">
    <property type="term" value="P:cell development"/>
    <property type="evidence" value="ECO:0007669"/>
    <property type="project" value="UniProtKB-ARBA"/>
</dbReference>
<dbReference type="GO" id="GO:0001708">
    <property type="term" value="P:cell fate specification"/>
    <property type="evidence" value="ECO:0007669"/>
    <property type="project" value="TreeGrafter"/>
</dbReference>
<dbReference type="GO" id="GO:0007267">
    <property type="term" value="P:cell-cell signaling"/>
    <property type="evidence" value="ECO:0007669"/>
    <property type="project" value="InterPro"/>
</dbReference>
<dbReference type="GO" id="GO:0007417">
    <property type="term" value="P:central nervous system development"/>
    <property type="evidence" value="ECO:0007669"/>
    <property type="project" value="UniProtKB-ARBA"/>
</dbReference>
<dbReference type="GO" id="GO:0030182">
    <property type="term" value="P:neuron differentiation"/>
    <property type="evidence" value="ECO:0007669"/>
    <property type="project" value="UniProtKB-ARBA"/>
</dbReference>
<dbReference type="GO" id="GO:0006508">
    <property type="term" value="P:proteolysis"/>
    <property type="evidence" value="ECO:0007669"/>
    <property type="project" value="UniProtKB-KW"/>
</dbReference>
<dbReference type="GO" id="GO:0010468">
    <property type="term" value="P:regulation of gene expression"/>
    <property type="evidence" value="ECO:0007669"/>
    <property type="project" value="TreeGrafter"/>
</dbReference>
<dbReference type="GO" id="GO:0007224">
    <property type="term" value="P:smoothened signaling pathway"/>
    <property type="evidence" value="ECO:0007669"/>
    <property type="project" value="TreeGrafter"/>
</dbReference>
<dbReference type="GO" id="GO:0009888">
    <property type="term" value="P:tissue development"/>
    <property type="evidence" value="ECO:0007669"/>
    <property type="project" value="UniProtKB-ARBA"/>
</dbReference>
<dbReference type="Gene3D" id="3.30.1380.10">
    <property type="match status" value="1"/>
</dbReference>
<dbReference type="InterPro" id="IPR001657">
    <property type="entry name" value="Hedgehog"/>
</dbReference>
<dbReference type="InterPro" id="IPR009045">
    <property type="entry name" value="Hedgehog_sig/DD-Pept_Zn-bd_sf"/>
</dbReference>
<dbReference type="InterPro" id="IPR050387">
    <property type="entry name" value="Hedgehog_Signaling"/>
</dbReference>
<dbReference type="InterPro" id="IPR000320">
    <property type="entry name" value="Hedgehog_signalling_dom"/>
</dbReference>
<dbReference type="PANTHER" id="PTHR11889">
    <property type="entry name" value="HEDGEHOG"/>
    <property type="match status" value="1"/>
</dbReference>
<dbReference type="PANTHER" id="PTHR11889:SF36">
    <property type="entry name" value="SONIC HEDGEHOG PROTEIN"/>
    <property type="match status" value="1"/>
</dbReference>
<dbReference type="Pfam" id="PF01085">
    <property type="entry name" value="HH_signal"/>
    <property type="match status" value="1"/>
</dbReference>
<dbReference type="PRINTS" id="PR00632">
    <property type="entry name" value="SONICHHOG"/>
</dbReference>
<dbReference type="SUPFAM" id="SSF55166">
    <property type="entry name" value="Hedgehog/DD-peptidase"/>
    <property type="match status" value="1"/>
</dbReference>
<gene>
    <name type="primary">twhh</name>
</gene>
<name>TWHH_DANKE</name>
<sequence>NSLAISVMNQWPGVKLRVTEGWDEDGHHFEESLHYEGRAVDITTSDRDKSKYG</sequence>
<comment type="function">
    <text evidence="1">Intercellular signal essential for a variety of patterning events during development. Involved in dorso-ventral patterning of the brain and in early patterning of the developing eyes (By similarity).</text>
</comment>
<comment type="subcellular location">
    <subcellularLocation>
        <location evidence="1">Cell membrane</location>
    </subcellularLocation>
    <subcellularLocation>
        <location evidence="1">Secreted</location>
        <location evidence="1">Extracellular space</location>
    </subcellularLocation>
    <text evidence="1">Tiggy-winkle hedgehog protein N-product: Cell membrane; Lipid-anchor; Extracellular side. The N-terminal peptide remains associated with the cell surface. Tiggy-winkle hedgehog protein C-product: Secreted, extracellular space. The C-terminal peptide diffuses from the cell.</text>
</comment>
<comment type="PTM">
    <text evidence="1">The C-terminal domain displays an autoproteolysis activity and a cholesterol transferase activity. Both activities result in the cleavage of the full-length protein and covalent attachment of a cholesterol moiety to the C-terminal of the newly generated N-terminal fragment (N-product). This covalent modification appears to play an essential role in restricting the spatial distribution of the protein activity to the cell surface. The N-product is the active species in both local and long-range signaling, whereas the C-product has no signaling activity (By similarity).</text>
</comment>
<comment type="similarity">
    <text evidence="3">Belongs to the hedgehog family.</text>
</comment>
<organism>
    <name type="scientific">Danio kerri</name>
    <name type="common">Blue danio</name>
    <name type="synonym">Brachydanio kerri</name>
    <dbReference type="NCBI Taxonomy" id="38750"/>
    <lineage>
        <taxon>Eukaryota</taxon>
        <taxon>Metazoa</taxon>
        <taxon>Chordata</taxon>
        <taxon>Craniata</taxon>
        <taxon>Vertebrata</taxon>
        <taxon>Euteleostomi</taxon>
        <taxon>Actinopterygii</taxon>
        <taxon>Neopterygii</taxon>
        <taxon>Teleostei</taxon>
        <taxon>Ostariophysi</taxon>
        <taxon>Cypriniformes</taxon>
        <taxon>Danionidae</taxon>
        <taxon>Danioninae</taxon>
        <taxon>Danio</taxon>
    </lineage>
</organism>
<feature type="chain" id="PRO_0000058755" description="Tiggy-winkle hedgehog protein">
    <location>
        <begin position="1" status="less than"/>
        <end position="53" status="greater than"/>
    </location>
</feature>
<feature type="binding site" evidence="2">
    <location>
        <position position="19"/>
    </location>
    <ligand>
        <name>Ca(2+)</name>
        <dbReference type="ChEBI" id="CHEBI:29108"/>
        <label>1</label>
    </ligand>
</feature>
<feature type="binding site" evidence="2">
    <location>
        <position position="20"/>
    </location>
    <ligand>
        <name>Ca(2+)</name>
        <dbReference type="ChEBI" id="CHEBI:29108"/>
        <label>1</label>
    </ligand>
</feature>
<feature type="binding site" evidence="2">
    <location>
        <position position="20"/>
    </location>
    <ligand>
        <name>Ca(2+)</name>
        <dbReference type="ChEBI" id="CHEBI:29108"/>
        <label>2</label>
    </ligand>
</feature>
<feature type="binding site" evidence="2">
    <location>
        <position position="23"/>
    </location>
    <ligand>
        <name>Ca(2+)</name>
        <dbReference type="ChEBI" id="CHEBI:29108"/>
        <label>2</label>
    </ligand>
</feature>
<feature type="binding site" evidence="2">
    <location>
        <position position="25"/>
    </location>
    <ligand>
        <name>Ca(2+)</name>
        <dbReference type="ChEBI" id="CHEBI:29108"/>
        <label>2</label>
    </ligand>
</feature>
<feature type="binding site" evidence="2">
    <location>
        <position position="34"/>
    </location>
    <ligand>
        <name>Zn(2+)</name>
        <dbReference type="ChEBI" id="CHEBI:29105"/>
    </ligand>
</feature>
<feature type="binding site" evidence="2">
    <location>
        <position position="41"/>
    </location>
    <ligand>
        <name>Zn(2+)</name>
        <dbReference type="ChEBI" id="CHEBI:29105"/>
    </ligand>
</feature>
<feature type="non-terminal residue">
    <location>
        <position position="1"/>
    </location>
</feature>
<feature type="non-terminal residue">
    <location>
        <position position="53"/>
    </location>
</feature>
<evidence type="ECO:0000250" key="1"/>
<evidence type="ECO:0000250" key="2">
    <source>
        <dbReference type="UniProtKB" id="Q15465"/>
    </source>
</evidence>
<evidence type="ECO:0000305" key="3"/>
<proteinExistence type="inferred from homology"/>
<accession>P79715</accession>
<keyword id="KW-0068">Autocatalytic cleavage</keyword>
<keyword id="KW-0106">Calcium</keyword>
<keyword id="KW-1003">Cell membrane</keyword>
<keyword id="KW-0217">Developmental protein</keyword>
<keyword id="KW-0378">Hydrolase</keyword>
<keyword id="KW-0472">Membrane</keyword>
<keyword id="KW-0479">Metal-binding</keyword>
<keyword id="KW-0645">Protease</keyword>
<keyword id="KW-0964">Secreted</keyword>
<keyword id="KW-0862">Zinc</keyword>